<reference key="1">
    <citation type="journal article" date="2009" name="PLoS ONE">
        <title>Salmonella paratyphi C: genetic divergence from Salmonella choleraesuis and pathogenic convergence with Salmonella typhi.</title>
        <authorList>
            <person name="Liu W.-Q."/>
            <person name="Feng Y."/>
            <person name="Wang Y."/>
            <person name="Zou Q.-H."/>
            <person name="Chen F."/>
            <person name="Guo J.-T."/>
            <person name="Peng Y.-H."/>
            <person name="Jin Y."/>
            <person name="Li Y.-G."/>
            <person name="Hu S.-N."/>
            <person name="Johnston R.N."/>
            <person name="Liu G.-R."/>
            <person name="Liu S.-L."/>
        </authorList>
    </citation>
    <scope>NUCLEOTIDE SEQUENCE [LARGE SCALE GENOMIC DNA]</scope>
    <source>
        <strain>RKS4594</strain>
    </source>
</reference>
<comment type="function">
    <text evidence="1">Catalyzes the ATP-dependent phosphorylation of N-acetyl-L-glutamate.</text>
</comment>
<comment type="catalytic activity">
    <reaction evidence="1">
        <text>N-acetyl-L-glutamate + ATP = N-acetyl-L-glutamyl 5-phosphate + ADP</text>
        <dbReference type="Rhea" id="RHEA:14629"/>
        <dbReference type="ChEBI" id="CHEBI:30616"/>
        <dbReference type="ChEBI" id="CHEBI:44337"/>
        <dbReference type="ChEBI" id="CHEBI:57936"/>
        <dbReference type="ChEBI" id="CHEBI:456216"/>
        <dbReference type="EC" id="2.7.2.8"/>
    </reaction>
</comment>
<comment type="pathway">
    <text evidence="1">Amino-acid biosynthesis; L-arginine biosynthesis; N(2)-acetyl-L-ornithine from L-glutamate: step 2/4.</text>
</comment>
<comment type="subunit">
    <text evidence="1">Homodimer.</text>
</comment>
<comment type="subcellular location">
    <subcellularLocation>
        <location evidence="1">Cytoplasm</location>
    </subcellularLocation>
</comment>
<comment type="similarity">
    <text evidence="1">Belongs to the acetylglutamate kinase family. ArgB subfamily.</text>
</comment>
<name>ARGB_SALPC</name>
<protein>
    <recommendedName>
        <fullName evidence="1">Acetylglutamate kinase</fullName>
        <ecNumber evidence="1">2.7.2.8</ecNumber>
    </recommendedName>
    <alternativeName>
        <fullName evidence="1">N-acetyl-L-glutamate 5-phosphotransferase</fullName>
    </alternativeName>
    <alternativeName>
        <fullName evidence="1">NAG kinase</fullName>
        <shortName evidence="1">NAGK</shortName>
    </alternativeName>
</protein>
<keyword id="KW-0028">Amino-acid biosynthesis</keyword>
<keyword id="KW-0055">Arginine biosynthesis</keyword>
<keyword id="KW-0067">ATP-binding</keyword>
<keyword id="KW-0963">Cytoplasm</keyword>
<keyword id="KW-0418">Kinase</keyword>
<keyword id="KW-0547">Nucleotide-binding</keyword>
<keyword id="KW-0808">Transferase</keyword>
<accession>C0Q475</accession>
<gene>
    <name evidence="1" type="primary">argB</name>
    <name type="ordered locus">SPC_4231</name>
</gene>
<evidence type="ECO:0000255" key="1">
    <source>
        <dbReference type="HAMAP-Rule" id="MF_00082"/>
    </source>
</evidence>
<sequence length="258" mass="27007">MMNPLIIKLGGVLLDSEEALERLFTALVNYRESHQRPLVIVHGGGCVVDELMKGLNLPVKKKDGLRVTPADQIGIITGALAGTANKTLLAWAKKHHIASVGLFLGDGDSVNVTQLDEALGHVGLAQPGSPKLINMLLENGFLPVVSSIGVTDDGQLMNVNADQAATALAATLGADLILLSDVSGILDGKGQRIAEMTASKAEQLIDQGIITDGMIVKVNAALDAARALGRPVDIASWRHAEQLPALFNGTPIGTRILA</sequence>
<dbReference type="EC" id="2.7.2.8" evidence="1"/>
<dbReference type="EMBL" id="CP000857">
    <property type="protein sequence ID" value="ACN48294.1"/>
    <property type="molecule type" value="Genomic_DNA"/>
</dbReference>
<dbReference type="RefSeq" id="WP_001575262.1">
    <property type="nucleotide sequence ID" value="NC_012125.1"/>
</dbReference>
<dbReference type="SMR" id="C0Q475"/>
<dbReference type="KEGG" id="sei:SPC_4231"/>
<dbReference type="HOGENOM" id="CLU_053680_1_1_6"/>
<dbReference type="UniPathway" id="UPA00068">
    <property type="reaction ID" value="UER00107"/>
</dbReference>
<dbReference type="Proteomes" id="UP000001599">
    <property type="component" value="Chromosome"/>
</dbReference>
<dbReference type="GO" id="GO:0005737">
    <property type="term" value="C:cytoplasm"/>
    <property type="evidence" value="ECO:0007669"/>
    <property type="project" value="UniProtKB-SubCell"/>
</dbReference>
<dbReference type="GO" id="GO:0003991">
    <property type="term" value="F:acetylglutamate kinase activity"/>
    <property type="evidence" value="ECO:0007669"/>
    <property type="project" value="UniProtKB-UniRule"/>
</dbReference>
<dbReference type="GO" id="GO:0005524">
    <property type="term" value="F:ATP binding"/>
    <property type="evidence" value="ECO:0007669"/>
    <property type="project" value="UniProtKB-UniRule"/>
</dbReference>
<dbReference type="GO" id="GO:0042450">
    <property type="term" value="P:arginine biosynthetic process via ornithine"/>
    <property type="evidence" value="ECO:0007669"/>
    <property type="project" value="UniProtKB-UniRule"/>
</dbReference>
<dbReference type="GO" id="GO:0006526">
    <property type="term" value="P:L-arginine biosynthetic process"/>
    <property type="evidence" value="ECO:0007669"/>
    <property type="project" value="UniProtKB-UniPathway"/>
</dbReference>
<dbReference type="CDD" id="cd04249">
    <property type="entry name" value="AAK_NAGK-NC"/>
    <property type="match status" value="1"/>
</dbReference>
<dbReference type="FunFam" id="3.40.1160.10:FF:000008">
    <property type="entry name" value="Acetylglutamate kinase"/>
    <property type="match status" value="1"/>
</dbReference>
<dbReference type="Gene3D" id="3.40.1160.10">
    <property type="entry name" value="Acetylglutamate kinase-like"/>
    <property type="match status" value="1"/>
</dbReference>
<dbReference type="HAMAP" id="MF_00082">
    <property type="entry name" value="ArgB"/>
    <property type="match status" value="1"/>
</dbReference>
<dbReference type="InterPro" id="IPR036393">
    <property type="entry name" value="AceGlu_kinase-like_sf"/>
</dbReference>
<dbReference type="InterPro" id="IPR004662">
    <property type="entry name" value="AcgluKinase_fam"/>
</dbReference>
<dbReference type="InterPro" id="IPR037528">
    <property type="entry name" value="ArgB"/>
</dbReference>
<dbReference type="InterPro" id="IPR001048">
    <property type="entry name" value="Asp/Glu/Uridylate_kinase"/>
</dbReference>
<dbReference type="InterPro" id="IPR041731">
    <property type="entry name" value="NAGK-NC"/>
</dbReference>
<dbReference type="NCBIfam" id="TIGR00761">
    <property type="entry name" value="argB"/>
    <property type="match status" value="1"/>
</dbReference>
<dbReference type="PANTHER" id="PTHR23342">
    <property type="entry name" value="N-ACETYLGLUTAMATE SYNTHASE"/>
    <property type="match status" value="1"/>
</dbReference>
<dbReference type="PANTHER" id="PTHR23342:SF0">
    <property type="entry name" value="N-ACETYLGLUTAMATE SYNTHASE, MITOCHONDRIAL"/>
    <property type="match status" value="1"/>
</dbReference>
<dbReference type="Pfam" id="PF00696">
    <property type="entry name" value="AA_kinase"/>
    <property type="match status" value="1"/>
</dbReference>
<dbReference type="PIRSF" id="PIRSF000728">
    <property type="entry name" value="NAGK"/>
    <property type="match status" value="1"/>
</dbReference>
<dbReference type="SUPFAM" id="SSF53633">
    <property type="entry name" value="Carbamate kinase-like"/>
    <property type="match status" value="1"/>
</dbReference>
<organism>
    <name type="scientific">Salmonella paratyphi C (strain RKS4594)</name>
    <dbReference type="NCBI Taxonomy" id="476213"/>
    <lineage>
        <taxon>Bacteria</taxon>
        <taxon>Pseudomonadati</taxon>
        <taxon>Pseudomonadota</taxon>
        <taxon>Gammaproteobacteria</taxon>
        <taxon>Enterobacterales</taxon>
        <taxon>Enterobacteriaceae</taxon>
        <taxon>Salmonella</taxon>
    </lineage>
</organism>
<proteinExistence type="inferred from homology"/>
<feature type="chain" id="PRO_1000118362" description="Acetylglutamate kinase">
    <location>
        <begin position="1"/>
        <end position="258"/>
    </location>
</feature>
<feature type="binding site" evidence="1">
    <location>
        <begin position="44"/>
        <end position="45"/>
    </location>
    <ligand>
        <name>substrate</name>
    </ligand>
</feature>
<feature type="binding site" evidence="1">
    <location>
        <position position="66"/>
    </location>
    <ligand>
        <name>substrate</name>
    </ligand>
</feature>
<feature type="binding site" evidence="1">
    <location>
        <position position="158"/>
    </location>
    <ligand>
        <name>substrate</name>
    </ligand>
</feature>
<feature type="binding site" evidence="1">
    <location>
        <begin position="181"/>
        <end position="186"/>
    </location>
    <ligand>
        <name>ATP</name>
        <dbReference type="ChEBI" id="CHEBI:30616"/>
    </ligand>
</feature>
<feature type="binding site" evidence="1">
    <location>
        <begin position="209"/>
        <end position="211"/>
    </location>
    <ligand>
        <name>ATP</name>
        <dbReference type="ChEBI" id="CHEBI:30616"/>
    </ligand>
</feature>
<feature type="site" description="Transition state stabilizer" evidence="1">
    <location>
        <position position="8"/>
    </location>
</feature>
<feature type="site" description="Transition state stabilizer" evidence="1">
    <location>
        <position position="217"/>
    </location>
</feature>